<sequence length="307" mass="33834">MRKIIVGSRRSKLALTQSQQFIDQLKRKHPNLEIEIKEIVTKGDQIVNVQLSKVGGKGLFVKEIEQALYDGTIDFAIHSLKDVPSVLPEGLTLGCIPVREDARDAYIAKHHIPLHELKPGSIVGTSSLRRGAQLLDQYPHLEIKWIRGNIDTRLAKLRDEDYDAIILAAAGLNRMGWDKSIVTEYLNPELMLPAIGQGALGIECRSDDAEVLALLKSVHDEETELCTEAERTFLRLMDGSCQVPIAGHATMVGESIEFTGLIMSPDGKEKYKVTHSGGNPIEIGTQVAKAMEQNGAKAIIETLNQDI</sequence>
<comment type="function">
    <text evidence="1">Tetrapolymerization of the monopyrrole PBG into the hydroxymethylbilane pre-uroporphyrinogen in several discrete steps.</text>
</comment>
<comment type="catalytic activity">
    <reaction evidence="1">
        <text>4 porphobilinogen + H2O = hydroxymethylbilane + 4 NH4(+)</text>
        <dbReference type="Rhea" id="RHEA:13185"/>
        <dbReference type="ChEBI" id="CHEBI:15377"/>
        <dbReference type="ChEBI" id="CHEBI:28938"/>
        <dbReference type="ChEBI" id="CHEBI:57845"/>
        <dbReference type="ChEBI" id="CHEBI:58126"/>
        <dbReference type="EC" id="2.5.1.61"/>
    </reaction>
</comment>
<comment type="cofactor">
    <cofactor evidence="1">
        <name>dipyrromethane</name>
        <dbReference type="ChEBI" id="CHEBI:60342"/>
    </cofactor>
    <text evidence="1">Binds 1 dipyrromethane group covalently.</text>
</comment>
<comment type="pathway">
    <text evidence="1">Porphyrin-containing compound metabolism; protoporphyrin-IX biosynthesis; coproporphyrinogen-III from 5-aminolevulinate: step 2/4.</text>
</comment>
<comment type="subunit">
    <text evidence="1">Monomer.</text>
</comment>
<comment type="miscellaneous">
    <text evidence="1">The porphobilinogen subunits are added to the dipyrromethane group.</text>
</comment>
<comment type="similarity">
    <text evidence="1">Belongs to the HMBS family.</text>
</comment>
<organism>
    <name type="scientific">Macrococcus caseolyticus (strain JCSC5402)</name>
    <name type="common">Macrococcoides caseolyticum</name>
    <dbReference type="NCBI Taxonomy" id="458233"/>
    <lineage>
        <taxon>Bacteria</taxon>
        <taxon>Bacillati</taxon>
        <taxon>Bacillota</taxon>
        <taxon>Bacilli</taxon>
        <taxon>Bacillales</taxon>
        <taxon>Staphylococcaceae</taxon>
        <taxon>Macrococcoides</taxon>
    </lineage>
</organism>
<protein>
    <recommendedName>
        <fullName evidence="1">Porphobilinogen deaminase</fullName>
        <shortName evidence="1">PBG</shortName>
        <ecNumber evidence="1">2.5.1.61</ecNumber>
    </recommendedName>
    <alternativeName>
        <fullName evidence="1">Hydroxymethylbilane synthase</fullName>
        <shortName evidence="1">HMBS</shortName>
    </alternativeName>
    <alternativeName>
        <fullName evidence="1">Pre-uroporphyrinogen synthase</fullName>
    </alternativeName>
</protein>
<proteinExistence type="inferred from homology"/>
<feature type="chain" id="PRO_1000125676" description="Porphobilinogen deaminase">
    <location>
        <begin position="1"/>
        <end position="307"/>
    </location>
</feature>
<feature type="modified residue" description="S-(dipyrrolylmethanemethyl)cysteine" evidence="1">
    <location>
        <position position="241"/>
    </location>
</feature>
<keyword id="KW-0627">Porphyrin biosynthesis</keyword>
<keyword id="KW-1185">Reference proteome</keyword>
<keyword id="KW-0808">Transferase</keyword>
<evidence type="ECO:0000255" key="1">
    <source>
        <dbReference type="HAMAP-Rule" id="MF_00260"/>
    </source>
</evidence>
<name>HEM3_MACCJ</name>
<accession>B9E743</accession>
<dbReference type="EC" id="2.5.1.61" evidence="1"/>
<dbReference type="EMBL" id="AP009484">
    <property type="protein sequence ID" value="BAH18011.1"/>
    <property type="molecule type" value="Genomic_DNA"/>
</dbReference>
<dbReference type="RefSeq" id="WP_012657209.1">
    <property type="nucleotide sequence ID" value="NC_011999.1"/>
</dbReference>
<dbReference type="SMR" id="B9E743"/>
<dbReference type="STRING" id="458233.MCCL_1304"/>
<dbReference type="GeneID" id="61128796"/>
<dbReference type="KEGG" id="mcl:MCCL_1304"/>
<dbReference type="eggNOG" id="COG0181">
    <property type="taxonomic scope" value="Bacteria"/>
</dbReference>
<dbReference type="HOGENOM" id="CLU_019704_0_2_9"/>
<dbReference type="OrthoDB" id="9810298at2"/>
<dbReference type="UniPathway" id="UPA00251">
    <property type="reaction ID" value="UER00319"/>
</dbReference>
<dbReference type="Proteomes" id="UP000001383">
    <property type="component" value="Chromosome"/>
</dbReference>
<dbReference type="GO" id="GO:0005737">
    <property type="term" value="C:cytoplasm"/>
    <property type="evidence" value="ECO:0007669"/>
    <property type="project" value="TreeGrafter"/>
</dbReference>
<dbReference type="GO" id="GO:0004418">
    <property type="term" value="F:hydroxymethylbilane synthase activity"/>
    <property type="evidence" value="ECO:0007669"/>
    <property type="project" value="UniProtKB-UniRule"/>
</dbReference>
<dbReference type="GO" id="GO:0006782">
    <property type="term" value="P:protoporphyrinogen IX biosynthetic process"/>
    <property type="evidence" value="ECO:0007669"/>
    <property type="project" value="UniProtKB-UniRule"/>
</dbReference>
<dbReference type="CDD" id="cd13646">
    <property type="entry name" value="PBP2_EcHMBS_like"/>
    <property type="match status" value="1"/>
</dbReference>
<dbReference type="FunFam" id="3.40.190.10:FF:000004">
    <property type="entry name" value="Porphobilinogen deaminase"/>
    <property type="match status" value="1"/>
</dbReference>
<dbReference type="FunFam" id="3.40.190.10:FF:000005">
    <property type="entry name" value="Porphobilinogen deaminase"/>
    <property type="match status" value="1"/>
</dbReference>
<dbReference type="Gene3D" id="3.40.190.10">
    <property type="entry name" value="Periplasmic binding protein-like II"/>
    <property type="match status" value="2"/>
</dbReference>
<dbReference type="Gene3D" id="3.30.160.40">
    <property type="entry name" value="Porphobilinogen deaminase, C-terminal domain"/>
    <property type="match status" value="1"/>
</dbReference>
<dbReference type="HAMAP" id="MF_00260">
    <property type="entry name" value="Porphobil_deam"/>
    <property type="match status" value="1"/>
</dbReference>
<dbReference type="InterPro" id="IPR000860">
    <property type="entry name" value="HemC"/>
</dbReference>
<dbReference type="InterPro" id="IPR022419">
    <property type="entry name" value="Porphobilin_deaminase_cofac_BS"/>
</dbReference>
<dbReference type="InterPro" id="IPR022417">
    <property type="entry name" value="Porphobilin_deaminase_N"/>
</dbReference>
<dbReference type="InterPro" id="IPR022418">
    <property type="entry name" value="Porphobilinogen_deaminase_C"/>
</dbReference>
<dbReference type="InterPro" id="IPR036803">
    <property type="entry name" value="Porphobilinogen_deaminase_C_sf"/>
</dbReference>
<dbReference type="NCBIfam" id="TIGR00212">
    <property type="entry name" value="hemC"/>
    <property type="match status" value="1"/>
</dbReference>
<dbReference type="PANTHER" id="PTHR11557">
    <property type="entry name" value="PORPHOBILINOGEN DEAMINASE"/>
    <property type="match status" value="1"/>
</dbReference>
<dbReference type="PANTHER" id="PTHR11557:SF0">
    <property type="entry name" value="PORPHOBILINOGEN DEAMINASE"/>
    <property type="match status" value="1"/>
</dbReference>
<dbReference type="Pfam" id="PF01379">
    <property type="entry name" value="Porphobil_deam"/>
    <property type="match status" value="1"/>
</dbReference>
<dbReference type="Pfam" id="PF03900">
    <property type="entry name" value="Porphobil_deamC"/>
    <property type="match status" value="1"/>
</dbReference>
<dbReference type="PIRSF" id="PIRSF001438">
    <property type="entry name" value="4pyrrol_synth_OHMeBilane_synth"/>
    <property type="match status" value="1"/>
</dbReference>
<dbReference type="PRINTS" id="PR00151">
    <property type="entry name" value="PORPHBDMNASE"/>
</dbReference>
<dbReference type="SUPFAM" id="SSF53850">
    <property type="entry name" value="Periplasmic binding protein-like II"/>
    <property type="match status" value="1"/>
</dbReference>
<dbReference type="SUPFAM" id="SSF54782">
    <property type="entry name" value="Porphobilinogen deaminase (hydroxymethylbilane synthase), C-terminal domain"/>
    <property type="match status" value="1"/>
</dbReference>
<dbReference type="PROSITE" id="PS00533">
    <property type="entry name" value="PORPHOBILINOGEN_DEAM"/>
    <property type="match status" value="1"/>
</dbReference>
<gene>
    <name evidence="1" type="primary">hemC</name>
    <name type="ordered locus">MCCL_1304</name>
</gene>
<reference key="1">
    <citation type="journal article" date="2009" name="J. Bacteriol.">
        <title>Complete genome sequence of Macrococcus caseolyticus strain JCSCS5402, reflecting the ancestral genome of the human-pathogenic staphylococci.</title>
        <authorList>
            <person name="Baba T."/>
            <person name="Kuwahara-Arai K."/>
            <person name="Uchiyama I."/>
            <person name="Takeuchi F."/>
            <person name="Ito T."/>
            <person name="Hiramatsu K."/>
        </authorList>
    </citation>
    <scope>NUCLEOTIDE SEQUENCE [LARGE SCALE GENOMIC DNA]</scope>
    <source>
        <strain>JCSC5402</strain>
    </source>
</reference>